<organism>
    <name type="scientific">Hapsidospora chrysogena</name>
    <name type="common">Acremonium chrysogenum</name>
    <dbReference type="NCBI Taxonomy" id="5044"/>
    <lineage>
        <taxon>Eukaryota</taxon>
        <taxon>Fungi</taxon>
        <taxon>Dikarya</taxon>
        <taxon>Ascomycota</taxon>
        <taxon>Pezizomycotina</taxon>
        <taxon>Sordariomycetes</taxon>
        <taxon>Hypocreomycetidae</taxon>
        <taxon>Hypocreales</taxon>
        <taxon>Bionectriaceae</taxon>
        <taxon>Hapsidospora</taxon>
    </lineage>
</organism>
<evidence type="ECO:0000250" key="1">
    <source>
        <dbReference type="UniProtKB" id="P68363"/>
    </source>
</evidence>
<evidence type="ECO:0000250" key="2">
    <source>
        <dbReference type="UniProtKB" id="Q13509"/>
    </source>
</evidence>
<evidence type="ECO:0000256" key="3">
    <source>
        <dbReference type="SAM" id="MobiDB-lite"/>
    </source>
</evidence>
<evidence type="ECO:0000305" key="4"/>
<reference key="1">
    <citation type="journal article" date="1994" name="Curr. Genet.">
        <title>Development of an homologous transformation system for Acremonium chrysogenum based on the beta-tubulin gene.</title>
        <authorList>
            <person name="Nowak C."/>
            <person name="Kueck U."/>
        </authorList>
    </citation>
    <scope>NUCLEOTIDE SEQUENCE [GENOMIC DNA]</scope>
    <source>
        <strain>H780</strain>
    </source>
</reference>
<protein>
    <recommendedName>
        <fullName>Tubulin beta chain</fullName>
    </recommendedName>
    <alternativeName>
        <fullName>Beta-tubulin</fullName>
    </alternativeName>
</protein>
<name>TBB_HAPCH</name>
<dbReference type="EMBL" id="X72789">
    <property type="protein sequence ID" value="CAA51304.1"/>
    <property type="molecule type" value="Genomic_DNA"/>
</dbReference>
<dbReference type="PIR" id="S40413">
    <property type="entry name" value="S40413"/>
</dbReference>
<dbReference type="SMR" id="P41741"/>
<dbReference type="GO" id="GO:0005737">
    <property type="term" value="C:cytoplasm"/>
    <property type="evidence" value="ECO:0007669"/>
    <property type="project" value="UniProtKB-KW"/>
</dbReference>
<dbReference type="GO" id="GO:0005874">
    <property type="term" value="C:microtubule"/>
    <property type="evidence" value="ECO:0007669"/>
    <property type="project" value="UniProtKB-KW"/>
</dbReference>
<dbReference type="GO" id="GO:0005525">
    <property type="term" value="F:GTP binding"/>
    <property type="evidence" value="ECO:0007669"/>
    <property type="project" value="UniProtKB-KW"/>
</dbReference>
<dbReference type="GO" id="GO:0003924">
    <property type="term" value="F:GTPase activity"/>
    <property type="evidence" value="ECO:0007669"/>
    <property type="project" value="InterPro"/>
</dbReference>
<dbReference type="GO" id="GO:0046872">
    <property type="term" value="F:metal ion binding"/>
    <property type="evidence" value="ECO:0007669"/>
    <property type="project" value="UniProtKB-KW"/>
</dbReference>
<dbReference type="GO" id="GO:0005200">
    <property type="term" value="F:structural constituent of cytoskeleton"/>
    <property type="evidence" value="ECO:0007669"/>
    <property type="project" value="InterPro"/>
</dbReference>
<dbReference type="GO" id="GO:0007017">
    <property type="term" value="P:microtubule-based process"/>
    <property type="evidence" value="ECO:0007669"/>
    <property type="project" value="InterPro"/>
</dbReference>
<dbReference type="CDD" id="cd02187">
    <property type="entry name" value="beta_tubulin"/>
    <property type="match status" value="1"/>
</dbReference>
<dbReference type="FunFam" id="1.10.287.600:FF:000003">
    <property type="entry name" value="Tubulin beta chain"/>
    <property type="match status" value="1"/>
</dbReference>
<dbReference type="FunFam" id="3.30.1330.20:FF:000002">
    <property type="entry name" value="Tubulin beta chain"/>
    <property type="match status" value="1"/>
</dbReference>
<dbReference type="FunFam" id="3.40.50.1440:FF:000009">
    <property type="entry name" value="Tubulin beta chain"/>
    <property type="match status" value="1"/>
</dbReference>
<dbReference type="Gene3D" id="1.10.287.600">
    <property type="entry name" value="Helix hairpin bin"/>
    <property type="match status" value="1"/>
</dbReference>
<dbReference type="Gene3D" id="3.30.1330.20">
    <property type="entry name" value="Tubulin/FtsZ, C-terminal domain"/>
    <property type="match status" value="1"/>
</dbReference>
<dbReference type="Gene3D" id="3.40.50.1440">
    <property type="entry name" value="Tubulin/FtsZ, GTPase domain"/>
    <property type="match status" value="1"/>
</dbReference>
<dbReference type="InterPro" id="IPR013838">
    <property type="entry name" value="Beta-tubulin_BS"/>
</dbReference>
<dbReference type="InterPro" id="IPR002453">
    <property type="entry name" value="Beta_tubulin"/>
</dbReference>
<dbReference type="InterPro" id="IPR008280">
    <property type="entry name" value="Tub_FtsZ_C"/>
</dbReference>
<dbReference type="InterPro" id="IPR000217">
    <property type="entry name" value="Tubulin"/>
</dbReference>
<dbReference type="InterPro" id="IPR037103">
    <property type="entry name" value="Tubulin/FtsZ-like_C"/>
</dbReference>
<dbReference type="InterPro" id="IPR018316">
    <property type="entry name" value="Tubulin/FtsZ_2-layer-sand-dom"/>
</dbReference>
<dbReference type="InterPro" id="IPR036525">
    <property type="entry name" value="Tubulin/FtsZ_GTPase_sf"/>
</dbReference>
<dbReference type="InterPro" id="IPR023123">
    <property type="entry name" value="Tubulin_C"/>
</dbReference>
<dbReference type="InterPro" id="IPR017975">
    <property type="entry name" value="Tubulin_CS"/>
</dbReference>
<dbReference type="InterPro" id="IPR003008">
    <property type="entry name" value="Tubulin_FtsZ_GTPase"/>
</dbReference>
<dbReference type="PANTHER" id="PTHR11588">
    <property type="entry name" value="TUBULIN"/>
    <property type="match status" value="1"/>
</dbReference>
<dbReference type="Pfam" id="PF00091">
    <property type="entry name" value="Tubulin"/>
    <property type="match status" value="1"/>
</dbReference>
<dbReference type="Pfam" id="PF03953">
    <property type="entry name" value="Tubulin_C"/>
    <property type="match status" value="1"/>
</dbReference>
<dbReference type="PRINTS" id="PR01163">
    <property type="entry name" value="BETATUBULIN"/>
</dbReference>
<dbReference type="PRINTS" id="PR01161">
    <property type="entry name" value="TUBULIN"/>
</dbReference>
<dbReference type="SMART" id="SM00864">
    <property type="entry name" value="Tubulin"/>
    <property type="match status" value="1"/>
</dbReference>
<dbReference type="SMART" id="SM00865">
    <property type="entry name" value="Tubulin_C"/>
    <property type="match status" value="1"/>
</dbReference>
<dbReference type="SUPFAM" id="SSF55307">
    <property type="entry name" value="Tubulin C-terminal domain-like"/>
    <property type="match status" value="1"/>
</dbReference>
<dbReference type="SUPFAM" id="SSF52490">
    <property type="entry name" value="Tubulin nucleotide-binding domain-like"/>
    <property type="match status" value="1"/>
</dbReference>
<dbReference type="PROSITE" id="PS00227">
    <property type="entry name" value="TUBULIN"/>
    <property type="match status" value="1"/>
</dbReference>
<dbReference type="PROSITE" id="PS00228">
    <property type="entry name" value="TUBULIN_B_AUTOREG"/>
    <property type="match status" value="1"/>
</dbReference>
<feature type="chain" id="PRO_0000048398" description="Tubulin beta chain">
    <location>
        <begin position="1"/>
        <end position="447"/>
    </location>
</feature>
<feature type="region of interest" description="Disordered" evidence="3">
    <location>
        <begin position="427"/>
        <end position="447"/>
    </location>
</feature>
<feature type="compositionally biased region" description="Acidic residues" evidence="3">
    <location>
        <begin position="429"/>
        <end position="447"/>
    </location>
</feature>
<feature type="binding site" evidence="2">
    <location>
        <position position="11"/>
    </location>
    <ligand>
        <name>GTP</name>
        <dbReference type="ChEBI" id="CHEBI:37565"/>
    </ligand>
</feature>
<feature type="binding site" evidence="1">
    <location>
        <position position="69"/>
    </location>
    <ligand>
        <name>GTP</name>
        <dbReference type="ChEBI" id="CHEBI:37565"/>
    </ligand>
</feature>
<feature type="binding site" evidence="1">
    <location>
        <position position="69"/>
    </location>
    <ligand>
        <name>Mg(2+)</name>
        <dbReference type="ChEBI" id="CHEBI:18420"/>
    </ligand>
</feature>
<feature type="binding site" evidence="2">
    <location>
        <position position="138"/>
    </location>
    <ligand>
        <name>GTP</name>
        <dbReference type="ChEBI" id="CHEBI:37565"/>
    </ligand>
</feature>
<feature type="binding site" evidence="2">
    <location>
        <position position="142"/>
    </location>
    <ligand>
        <name>GTP</name>
        <dbReference type="ChEBI" id="CHEBI:37565"/>
    </ligand>
</feature>
<feature type="binding site" evidence="2">
    <location>
        <position position="143"/>
    </location>
    <ligand>
        <name>GTP</name>
        <dbReference type="ChEBI" id="CHEBI:37565"/>
    </ligand>
</feature>
<feature type="binding site" evidence="2">
    <location>
        <position position="144"/>
    </location>
    <ligand>
        <name>GTP</name>
        <dbReference type="ChEBI" id="CHEBI:37565"/>
    </ligand>
</feature>
<feature type="binding site" evidence="2">
    <location>
        <position position="204"/>
    </location>
    <ligand>
        <name>GTP</name>
        <dbReference type="ChEBI" id="CHEBI:37565"/>
    </ligand>
</feature>
<feature type="binding site" evidence="2">
    <location>
        <position position="226"/>
    </location>
    <ligand>
        <name>GTP</name>
        <dbReference type="ChEBI" id="CHEBI:37565"/>
    </ligand>
</feature>
<accession>P41741</accession>
<gene>
    <name type="primary">TUB2</name>
</gene>
<sequence>MREIVHLQTGQCGNQIGAAFWQTISGEHGLDSNGVYNGSSELQLERMSVYFNEASGNKYVPRAVLVDLEPGTMDAVRAGPFGQLFRPDNFVFGQSGAGNNWAKGHYTEGAELVDNVLDVVRREAEGCDCLQGFQITHSLGGGTGAGMGTLLISKIREEFPDRMMATFSVVPSPKVSDTVVEPYNATLSVHQLVEHSDETFCIDNEALYDICMRTLKLSNPSYGDLNYLVSAVMSGVTTCLRFPGQLNSDLRKLAVNMVPFPRLHFFMVGFAPLTSRGAHSFRAVSVPELTQQMFDPKNMMAASDFRNGRYLTCSAIFRGKVAMKEVEDQMRNVQSKNSSYFVEWIPNNIQTALCAIPPRGLKMSSTFIGNSTSIQELFKRVGDQFTAMFRRKAFLHWYTGEGMDEMEFTEAESNMNDLVSEYQQYQDAGIDEEEEEYEEELPLEGEE</sequence>
<proteinExistence type="inferred from homology"/>
<comment type="function">
    <text>Tubulin is the major constituent of microtubules, a cylinder consisting of laterally associated linear protofilaments composed of alpha- and beta-tubulin heterodimers. Microtubules grow by the addition of GTP-tubulin dimers to the microtubule end, where a stabilizing cap forms. Below the cap, tubulin dimers are in GDP-bound state, owing to GTPase activity of alpha-tubulin.</text>
</comment>
<comment type="cofactor">
    <cofactor evidence="1">
        <name>Mg(2+)</name>
        <dbReference type="ChEBI" id="CHEBI:18420"/>
    </cofactor>
</comment>
<comment type="subunit">
    <text>Dimer of alpha and beta chains. A typical microtubule is a hollow water-filled tube with an outer diameter of 25 nm and an inner diameter of 15 nM. Alpha-beta heterodimers associate head-to-tail to form protofilaments running lengthwise along the microtubule wall with the beta-tubulin subunit facing the microtubule plus end conferring a structural polarity. Microtubules usually have 13 protofilaments but different protofilament numbers can be found in some organisms and specialized cells.</text>
</comment>
<comment type="subcellular location">
    <subcellularLocation>
        <location>Cytoplasm</location>
        <location>Cytoskeleton</location>
    </subcellularLocation>
</comment>
<comment type="similarity">
    <text evidence="4">Belongs to the tubulin family.</text>
</comment>
<keyword id="KW-0963">Cytoplasm</keyword>
<keyword id="KW-0206">Cytoskeleton</keyword>
<keyword id="KW-0342">GTP-binding</keyword>
<keyword id="KW-0460">Magnesium</keyword>
<keyword id="KW-0479">Metal-binding</keyword>
<keyword id="KW-0493">Microtubule</keyword>
<keyword id="KW-0547">Nucleotide-binding</keyword>